<protein>
    <recommendedName>
        <fullName evidence="1">UPF0299 membrane protein YohJ</fullName>
    </recommendedName>
</protein>
<name>YOHJ_ECOLC</name>
<evidence type="ECO:0000255" key="1">
    <source>
        <dbReference type="HAMAP-Rule" id="MF_01144"/>
    </source>
</evidence>
<sequence length="132" mass="14579">MSKTLNIIWQYLRAFVLIYACLYAGIFIASLLPVTIPGSIIGMLILFVLLALQILPAKWVNPGCYVLIRYMALLFVPIGVGVMQYFDLLRAQFGPVVVSCAVSTLVVFLVVSWSSQLVHGERKVVGQKGSEE</sequence>
<dbReference type="EMBL" id="CP000946">
    <property type="protein sequence ID" value="ACA77169.1"/>
    <property type="molecule type" value="Genomic_DNA"/>
</dbReference>
<dbReference type="RefSeq" id="WP_001295452.1">
    <property type="nucleotide sequence ID" value="NZ_MTFT01000031.1"/>
</dbReference>
<dbReference type="SMR" id="B1IYC8"/>
<dbReference type="KEGG" id="ecl:EcolC_1507"/>
<dbReference type="HOGENOM" id="CLU_113736_1_1_6"/>
<dbReference type="GO" id="GO:0005886">
    <property type="term" value="C:plasma membrane"/>
    <property type="evidence" value="ECO:0007669"/>
    <property type="project" value="UniProtKB-SubCell"/>
</dbReference>
<dbReference type="HAMAP" id="MF_01144">
    <property type="entry name" value="UPF0299"/>
    <property type="match status" value="1"/>
</dbReference>
<dbReference type="InterPro" id="IPR005538">
    <property type="entry name" value="LrgA/CidA"/>
</dbReference>
<dbReference type="InterPro" id="IPR022957">
    <property type="entry name" value="Uncharacterised_UPF0299"/>
</dbReference>
<dbReference type="NCBIfam" id="NF002494">
    <property type="entry name" value="PRK01821.1"/>
    <property type="match status" value="1"/>
</dbReference>
<dbReference type="PANTHER" id="PTHR33931">
    <property type="entry name" value="HOLIN-LIKE PROTEIN CIDA-RELATED"/>
    <property type="match status" value="1"/>
</dbReference>
<dbReference type="PANTHER" id="PTHR33931:SF5">
    <property type="entry name" value="UPF0299 MEMBRANE PROTEIN YOHJ"/>
    <property type="match status" value="1"/>
</dbReference>
<dbReference type="Pfam" id="PF03788">
    <property type="entry name" value="LrgA"/>
    <property type="match status" value="1"/>
</dbReference>
<accession>B1IYC8</accession>
<proteinExistence type="inferred from homology"/>
<reference key="1">
    <citation type="submission" date="2008-02" db="EMBL/GenBank/DDBJ databases">
        <title>Complete sequence of Escherichia coli C str. ATCC 8739.</title>
        <authorList>
            <person name="Copeland A."/>
            <person name="Lucas S."/>
            <person name="Lapidus A."/>
            <person name="Glavina del Rio T."/>
            <person name="Dalin E."/>
            <person name="Tice H."/>
            <person name="Bruce D."/>
            <person name="Goodwin L."/>
            <person name="Pitluck S."/>
            <person name="Kiss H."/>
            <person name="Brettin T."/>
            <person name="Detter J.C."/>
            <person name="Han C."/>
            <person name="Kuske C.R."/>
            <person name="Schmutz J."/>
            <person name="Larimer F."/>
            <person name="Land M."/>
            <person name="Hauser L."/>
            <person name="Kyrpides N."/>
            <person name="Mikhailova N."/>
            <person name="Ingram L."/>
            <person name="Richardson P."/>
        </authorList>
    </citation>
    <scope>NUCLEOTIDE SEQUENCE [LARGE SCALE GENOMIC DNA]</scope>
    <source>
        <strain>ATCC 8739 / DSM 1576 / NBRC 3972 / NCIMB 8545 / WDCM 00012 / Crooks</strain>
    </source>
</reference>
<keyword id="KW-0997">Cell inner membrane</keyword>
<keyword id="KW-1003">Cell membrane</keyword>
<keyword id="KW-0472">Membrane</keyword>
<keyword id="KW-0812">Transmembrane</keyword>
<keyword id="KW-1133">Transmembrane helix</keyword>
<feature type="chain" id="PRO_1000085040" description="UPF0299 membrane protein YohJ">
    <location>
        <begin position="1"/>
        <end position="132"/>
    </location>
</feature>
<feature type="transmembrane region" description="Helical" evidence="1">
    <location>
        <begin position="7"/>
        <end position="27"/>
    </location>
</feature>
<feature type="transmembrane region" description="Helical" evidence="1">
    <location>
        <begin position="31"/>
        <end position="51"/>
    </location>
</feature>
<feature type="transmembrane region" description="Helical" evidence="1">
    <location>
        <begin position="63"/>
        <end position="83"/>
    </location>
</feature>
<feature type="transmembrane region" description="Helical" evidence="1">
    <location>
        <begin position="93"/>
        <end position="113"/>
    </location>
</feature>
<comment type="subcellular location">
    <subcellularLocation>
        <location evidence="1">Cell inner membrane</location>
        <topology evidence="1">Multi-pass membrane protein</topology>
    </subcellularLocation>
</comment>
<comment type="similarity">
    <text evidence="1">Belongs to the UPF0299 family.</text>
</comment>
<organism>
    <name type="scientific">Escherichia coli (strain ATCC 8739 / DSM 1576 / NBRC 3972 / NCIMB 8545 / WDCM 00012 / Crooks)</name>
    <dbReference type="NCBI Taxonomy" id="481805"/>
    <lineage>
        <taxon>Bacteria</taxon>
        <taxon>Pseudomonadati</taxon>
        <taxon>Pseudomonadota</taxon>
        <taxon>Gammaproteobacteria</taxon>
        <taxon>Enterobacterales</taxon>
        <taxon>Enterobacteriaceae</taxon>
        <taxon>Escherichia</taxon>
    </lineage>
</organism>
<gene>
    <name evidence="1" type="primary">yohJ</name>
    <name type="ordered locus">EcolC_1507</name>
</gene>